<reference key="1">
    <citation type="journal article" date="1985" name="EMBO J.">
        <title>Isolation and structural organization of the Neurospora crassa copper metallothionein gene.</title>
        <authorList>
            <person name="Muenger K."/>
            <person name="Germann U.A."/>
            <person name="Lerch K."/>
        </authorList>
    </citation>
    <scope>NUCLEOTIDE SEQUENCE [GENOMIC DNA]</scope>
</reference>
<reference key="2">
    <citation type="journal article" date="1990" name="Appl. Environ. Microbiol.">
        <title>Expression of a Neurospora crassa metallothionein and its variants in Escherichia coli.</title>
        <authorList>
            <person name="Romeyer F.M."/>
            <person name="Jacobs F.A."/>
            <person name="Brousseau R."/>
        </authorList>
    </citation>
    <scope>NUCLEOTIDE SEQUENCE [GENOMIC DNA]</scope>
</reference>
<reference key="3">
    <citation type="journal article" date="1987" name="Experientia Suppl.">
        <title>Isolation and regulation of expression of the Neurospora crassa copper metallothionein gene.</title>
        <authorList>
            <person name="Muenger K."/>
            <person name="Germann U.A."/>
            <person name="Lerch K."/>
        </authorList>
    </citation>
    <scope>NUCLEOTIDE SEQUENCE [GENOMIC DNA]</scope>
</reference>
<reference key="4">
    <citation type="journal article" date="2003" name="Nature">
        <title>The genome sequence of the filamentous fungus Neurospora crassa.</title>
        <authorList>
            <person name="Galagan J.E."/>
            <person name="Calvo S.E."/>
            <person name="Borkovich K.A."/>
            <person name="Selker E.U."/>
            <person name="Read N.D."/>
            <person name="Jaffe D.B."/>
            <person name="FitzHugh W."/>
            <person name="Ma L.-J."/>
            <person name="Smirnov S."/>
            <person name="Purcell S."/>
            <person name="Rehman B."/>
            <person name="Elkins T."/>
            <person name="Engels R."/>
            <person name="Wang S."/>
            <person name="Nielsen C.B."/>
            <person name="Butler J."/>
            <person name="Endrizzi M."/>
            <person name="Qui D."/>
            <person name="Ianakiev P."/>
            <person name="Bell-Pedersen D."/>
            <person name="Nelson M.A."/>
            <person name="Werner-Washburne M."/>
            <person name="Selitrennikoff C.P."/>
            <person name="Kinsey J.A."/>
            <person name="Braun E.L."/>
            <person name="Zelter A."/>
            <person name="Schulte U."/>
            <person name="Kothe G.O."/>
            <person name="Jedd G."/>
            <person name="Mewes H.-W."/>
            <person name="Staben C."/>
            <person name="Marcotte E."/>
            <person name="Greenberg D."/>
            <person name="Roy A."/>
            <person name="Foley K."/>
            <person name="Naylor J."/>
            <person name="Stange-Thomann N."/>
            <person name="Barrett R."/>
            <person name="Gnerre S."/>
            <person name="Kamal M."/>
            <person name="Kamvysselis M."/>
            <person name="Mauceli E.W."/>
            <person name="Bielke C."/>
            <person name="Rudd S."/>
            <person name="Frishman D."/>
            <person name="Krystofova S."/>
            <person name="Rasmussen C."/>
            <person name="Metzenberg R.L."/>
            <person name="Perkins D.D."/>
            <person name="Kroken S."/>
            <person name="Cogoni C."/>
            <person name="Macino G."/>
            <person name="Catcheside D.E.A."/>
            <person name="Li W."/>
            <person name="Pratt R.J."/>
            <person name="Osmani S.A."/>
            <person name="DeSouza C.P.C."/>
            <person name="Glass N.L."/>
            <person name="Orbach M.J."/>
            <person name="Berglund J.A."/>
            <person name="Voelker R."/>
            <person name="Yarden O."/>
            <person name="Plamann M."/>
            <person name="Seiler S."/>
            <person name="Dunlap J.C."/>
            <person name="Radford A."/>
            <person name="Aramayo R."/>
            <person name="Natvig D.O."/>
            <person name="Alex L.A."/>
            <person name="Mannhaupt G."/>
            <person name="Ebbole D.J."/>
            <person name="Freitag M."/>
            <person name="Paulsen I."/>
            <person name="Sachs M.S."/>
            <person name="Lander E.S."/>
            <person name="Nusbaum C."/>
            <person name="Birren B.W."/>
        </authorList>
    </citation>
    <scope>NUCLEOTIDE SEQUENCE [LARGE SCALE GENOMIC DNA]</scope>
    <source>
        <strain>ATCC 24698 / 74-OR23-1A / CBS 708.71 / DSM 1257 / FGSC 987</strain>
    </source>
</reference>
<reference key="5">
    <citation type="journal article" date="1980" name="Nature">
        <title>Copper metallothionein, a copper-binding protein from Neurospora crassa.</title>
        <authorList>
            <person name="Lerch K."/>
        </authorList>
    </citation>
    <scope>PROTEIN SEQUENCE OF 2-26</scope>
    <scope>COPPER BINDING SITES</scope>
</reference>
<reference key="6">
    <citation type="journal article" date="1989" name="Biochemistry">
        <title>Proton NMR studies of a metallothionein from Neurospora crassa: sequence-specific assignments by NOE measurements in the rotating frame.</title>
        <authorList>
            <person name="Malikayil J.A."/>
            <person name="Lerch K."/>
            <person name="Armitage I.M."/>
        </authorList>
    </citation>
    <scope>STRUCTURE BY NMR</scope>
</reference>
<accession>P02807</accession>
<accession>Q7S702</accession>
<accession>V5ILF3</accession>
<feature type="initiator methionine" description="Removed" evidence="2">
    <location>
        <position position="1"/>
    </location>
</feature>
<feature type="peptide" id="PRO_0000197364" description="Metallothionein">
    <location>
        <begin position="2"/>
        <end position="26"/>
    </location>
</feature>
<feature type="region of interest" description="Disordered" evidence="1">
    <location>
        <begin position="1"/>
        <end position="26"/>
    </location>
</feature>
<feature type="compositionally biased region" description="Low complexity" evidence="1">
    <location>
        <begin position="1"/>
        <end position="14"/>
    </location>
</feature>
<feature type="compositionally biased region" description="Cys residues" evidence="1">
    <location>
        <begin position="15"/>
        <end position="26"/>
    </location>
</feature>
<feature type="binding site" evidence="4">
    <location>
        <position position="4"/>
    </location>
    <ligand>
        <name>Cu(+)</name>
        <dbReference type="ChEBI" id="CHEBI:49552"/>
        <label>1</label>
    </ligand>
</feature>
<feature type="binding site" evidence="4">
    <location>
        <position position="6"/>
    </location>
    <ligand>
        <name>Cu(+)</name>
        <dbReference type="ChEBI" id="CHEBI:49552"/>
        <label>2</label>
    </ligand>
</feature>
<feature type="binding site" evidence="4">
    <location>
        <position position="6"/>
    </location>
    <ligand>
        <name>Cu(+)</name>
        <dbReference type="ChEBI" id="CHEBI:49552"/>
        <label>3</label>
    </ligand>
</feature>
<feature type="binding site" evidence="4">
    <location>
        <position position="12"/>
    </location>
    <ligand>
        <name>Cu(+)</name>
        <dbReference type="ChEBI" id="CHEBI:49552"/>
        <label>4</label>
    </ligand>
</feature>
<feature type="binding site" evidence="4">
    <location>
        <position position="12"/>
    </location>
    <ligand>
        <name>Cu(+)</name>
        <dbReference type="ChEBI" id="CHEBI:49552"/>
        <label>5</label>
    </ligand>
</feature>
<feature type="binding site" evidence="4">
    <location>
        <position position="14"/>
    </location>
    <ligand>
        <name>Cu(+)</name>
        <dbReference type="ChEBI" id="CHEBI:49552"/>
        <label>6</label>
    </ligand>
</feature>
<feature type="binding site" evidence="4">
    <location>
        <position position="18"/>
    </location>
    <ligand>
        <name>Cu(+)</name>
        <dbReference type="ChEBI" id="CHEBI:49552"/>
        <label>5</label>
    </ligand>
</feature>
<feature type="binding site" evidence="4">
    <location>
        <position position="18"/>
    </location>
    <ligand>
        <name>Cu(+)</name>
        <dbReference type="ChEBI" id="CHEBI:49552"/>
        <label>6</label>
    </ligand>
</feature>
<feature type="binding site" evidence="4">
    <location>
        <position position="20"/>
    </location>
    <ligand>
        <name>Cu(+)</name>
        <dbReference type="ChEBI" id="CHEBI:49552"/>
        <label>3</label>
    </ligand>
</feature>
<feature type="binding site" evidence="4">
    <location>
        <position position="20"/>
    </location>
    <ligand>
        <name>Cu(+)</name>
        <dbReference type="ChEBI" id="CHEBI:49552"/>
        <label>4</label>
    </ligand>
</feature>
<feature type="binding site" evidence="4">
    <location>
        <position position="23"/>
    </location>
    <ligand>
        <name>Cu(+)</name>
        <dbReference type="ChEBI" id="CHEBI:49552"/>
        <label>1</label>
    </ligand>
</feature>
<feature type="binding site" evidence="4">
    <location>
        <position position="23"/>
    </location>
    <ligand>
        <name>Cu(+)</name>
        <dbReference type="ChEBI" id="CHEBI:49552"/>
        <label>2</label>
    </ligand>
</feature>
<feature type="sequence conflict" description="In Ref. 2; AAA33594." evidence="3" ref="2">
    <original>N</original>
    <variation>T</variation>
    <location>
        <position position="22"/>
    </location>
</feature>
<feature type="turn" evidence="5">
    <location>
        <begin position="9"/>
        <end position="11"/>
    </location>
</feature>
<feature type="strand" evidence="5">
    <location>
        <begin position="15"/>
        <end position="17"/>
    </location>
</feature>
<name>MT_NEUCR</name>
<evidence type="ECO:0000256" key="1">
    <source>
        <dbReference type="SAM" id="MobiDB-lite"/>
    </source>
</evidence>
<evidence type="ECO:0000269" key="2">
    <source>
    </source>
</evidence>
<evidence type="ECO:0000305" key="3"/>
<evidence type="ECO:0000305" key="4">
    <source>
    </source>
</evidence>
<evidence type="ECO:0007829" key="5">
    <source>
        <dbReference type="PDB" id="1T2Y"/>
    </source>
</evidence>
<proteinExistence type="evidence at protein level"/>
<sequence>MGDCGCSGASSCNCGSGCSCSNCGSK</sequence>
<dbReference type="EMBL" id="X03009">
    <property type="protein sequence ID" value="CAA26793.1"/>
    <property type="molecule type" value="Genomic_DNA"/>
</dbReference>
<dbReference type="EMBL" id="M59836">
    <property type="protein sequence ID" value="AAA33594.1"/>
    <property type="molecule type" value="Genomic_DNA"/>
</dbReference>
<dbReference type="EMBL" id="M27709">
    <property type="protein sequence ID" value="AAA33595.1"/>
    <property type="molecule type" value="Genomic_DNA"/>
</dbReference>
<dbReference type="EMBL" id="CM002241">
    <property type="protein sequence ID" value="ESA42185.1"/>
    <property type="molecule type" value="Genomic_DNA"/>
</dbReference>
<dbReference type="PIR" id="A24641">
    <property type="entry name" value="SMNC"/>
</dbReference>
<dbReference type="RefSeq" id="XP_011394960.1">
    <property type="nucleotide sequence ID" value="XM_011396658.1"/>
</dbReference>
<dbReference type="PDB" id="1T2Y">
    <property type="method" value="NMR"/>
    <property type="chains" value="A=2-26"/>
</dbReference>
<dbReference type="PDBsum" id="1T2Y"/>
<dbReference type="BMRB" id="P02807"/>
<dbReference type="SMR" id="P02807"/>
<dbReference type="STRING" id="367110.P02807"/>
<dbReference type="EnsemblFungi" id="ESA42185">
    <property type="protein sequence ID" value="ESA42185"/>
    <property type="gene ID" value="NCU05561"/>
</dbReference>
<dbReference type="GeneID" id="23568444"/>
<dbReference type="KEGG" id="ncr:NCU05561"/>
<dbReference type="VEuPathDB" id="FungiDB:NCU05561"/>
<dbReference type="InParanoid" id="P02807"/>
<dbReference type="EvolutionaryTrace" id="P02807"/>
<dbReference type="Proteomes" id="UP000001805">
    <property type="component" value="Chromosome 5, Linkage Group VI"/>
</dbReference>
<dbReference type="GO" id="GO:0046872">
    <property type="term" value="F:metal ion binding"/>
    <property type="evidence" value="ECO:0007669"/>
    <property type="project" value="UniProtKB-KW"/>
</dbReference>
<dbReference type="InterPro" id="IPR017854">
    <property type="entry name" value="Metalthion_dom_sf"/>
</dbReference>
<dbReference type="SUPFAM" id="SSF57868">
    <property type="entry name" value="Metallothionein"/>
    <property type="match status" value="1"/>
</dbReference>
<keyword id="KW-0002">3D-structure</keyword>
<keyword id="KW-0186">Copper</keyword>
<keyword id="KW-0903">Direct protein sequencing</keyword>
<keyword id="KW-0479">Metal-binding</keyword>
<keyword id="KW-0480">Metal-thiolate cluster</keyword>
<keyword id="KW-1185">Reference proteome</keyword>
<organism>
    <name type="scientific">Neurospora crassa (strain ATCC 24698 / 74-OR23-1A / CBS 708.71 / DSM 1257 / FGSC 987)</name>
    <dbReference type="NCBI Taxonomy" id="367110"/>
    <lineage>
        <taxon>Eukaryota</taxon>
        <taxon>Fungi</taxon>
        <taxon>Dikarya</taxon>
        <taxon>Ascomycota</taxon>
        <taxon>Pezizomycotina</taxon>
        <taxon>Sordariomycetes</taxon>
        <taxon>Sordariomycetidae</taxon>
        <taxon>Sordariales</taxon>
        <taxon>Sordariaceae</taxon>
        <taxon>Neurospora</taxon>
    </lineage>
</organism>
<comment type="induction">
    <text>By copper.</text>
</comment>
<comment type="miscellaneous">
    <text>The seven cysteines bind six copper (cuprous) ions.</text>
</comment>
<comment type="similarity">
    <text evidence="3">Belongs to the metallothionein superfamily. Type 8 family.</text>
</comment>
<protein>
    <recommendedName>
        <fullName>Metallothionein</fullName>
        <shortName>MT</shortName>
    </recommendedName>
</protein>
<gene>
    <name type="primary">cmt</name>
    <name type="synonym">ccg-12</name>
    <name type="ORF">NCU05561</name>
</gene>